<proteinExistence type="inferred from homology"/>
<gene>
    <name evidence="1" type="primary">nadD</name>
    <name type="ordered locus">GOX1148</name>
</gene>
<comment type="function">
    <text evidence="1">Catalyzes the reversible adenylation of nicotinate mononucleotide (NaMN) to nicotinic acid adenine dinucleotide (NaAD).</text>
</comment>
<comment type="catalytic activity">
    <reaction evidence="1">
        <text>nicotinate beta-D-ribonucleotide + ATP + H(+) = deamido-NAD(+) + diphosphate</text>
        <dbReference type="Rhea" id="RHEA:22860"/>
        <dbReference type="ChEBI" id="CHEBI:15378"/>
        <dbReference type="ChEBI" id="CHEBI:30616"/>
        <dbReference type="ChEBI" id="CHEBI:33019"/>
        <dbReference type="ChEBI" id="CHEBI:57502"/>
        <dbReference type="ChEBI" id="CHEBI:58437"/>
        <dbReference type="EC" id="2.7.7.18"/>
    </reaction>
</comment>
<comment type="pathway">
    <text evidence="1">Cofactor biosynthesis; NAD(+) biosynthesis; deamido-NAD(+) from nicotinate D-ribonucleotide: step 1/1.</text>
</comment>
<comment type="similarity">
    <text evidence="1">Belongs to the NadD family.</text>
</comment>
<organism>
    <name type="scientific">Gluconobacter oxydans (strain 621H)</name>
    <name type="common">Gluconobacter suboxydans</name>
    <dbReference type="NCBI Taxonomy" id="290633"/>
    <lineage>
        <taxon>Bacteria</taxon>
        <taxon>Pseudomonadati</taxon>
        <taxon>Pseudomonadota</taxon>
        <taxon>Alphaproteobacteria</taxon>
        <taxon>Acetobacterales</taxon>
        <taxon>Acetobacteraceae</taxon>
        <taxon>Gluconobacter</taxon>
    </lineage>
</organism>
<protein>
    <recommendedName>
        <fullName evidence="1">Probable nicotinate-nucleotide adenylyltransferase</fullName>
        <ecNumber evidence="1">2.7.7.18</ecNumber>
    </recommendedName>
    <alternativeName>
        <fullName evidence="1">Deamido-NAD(+) diphosphorylase</fullName>
    </alternativeName>
    <alternativeName>
        <fullName evidence="1">Deamido-NAD(+) pyrophosphorylase</fullName>
    </alternativeName>
    <alternativeName>
        <fullName evidence="1">Nicotinate mononucleotide adenylyltransferase</fullName>
        <shortName evidence="1">NaMN adenylyltransferase</shortName>
    </alternativeName>
</protein>
<feature type="chain" id="PRO_0000181414" description="Probable nicotinate-nucleotide adenylyltransferase">
    <location>
        <begin position="1"/>
        <end position="195"/>
    </location>
</feature>
<evidence type="ECO:0000255" key="1">
    <source>
        <dbReference type="HAMAP-Rule" id="MF_00244"/>
    </source>
</evidence>
<name>NADD_GLUOX</name>
<reference key="1">
    <citation type="journal article" date="2005" name="Nat. Biotechnol.">
        <title>Complete genome sequence of the acetic acid bacterium Gluconobacter oxydans.</title>
        <authorList>
            <person name="Prust C."/>
            <person name="Hoffmeister M."/>
            <person name="Liesegang H."/>
            <person name="Wiezer A."/>
            <person name="Fricke W.F."/>
            <person name="Ehrenreich A."/>
            <person name="Gottschalk G."/>
            <person name="Deppenmeier U."/>
        </authorList>
    </citation>
    <scope>NUCLEOTIDE SEQUENCE [LARGE SCALE GENOMIC DNA]</scope>
    <source>
        <strain>621H</strain>
    </source>
</reference>
<keyword id="KW-0067">ATP-binding</keyword>
<keyword id="KW-0520">NAD</keyword>
<keyword id="KW-0547">Nucleotide-binding</keyword>
<keyword id="KW-0548">Nucleotidyltransferase</keyword>
<keyword id="KW-0662">Pyridine nucleotide biosynthesis</keyword>
<keyword id="KW-1185">Reference proteome</keyword>
<keyword id="KW-0808">Transferase</keyword>
<sequence length="195" mass="21647">MRIGLLGGSFNPAHAGHLMLARRALRALRLDQVWLMVSPGNPLKPSKGMAPFRVRLASAERIADGRRIVATDIESRLGQRFTVKTVGLLKQRFPHVRFVWLMGADGLAQLSHWKRWRRLAAMVPIAVLPRPGSVSPALRGAAASVLRHQRRPSRESPVLAERKGNAWTFLSAPQNDISATALRESGQFRPDSDQE</sequence>
<dbReference type="EC" id="2.7.7.18" evidence="1"/>
<dbReference type="EMBL" id="CP000009">
    <property type="protein sequence ID" value="AAW60915.1"/>
    <property type="molecule type" value="Genomic_DNA"/>
</dbReference>
<dbReference type="RefSeq" id="WP_011252707.1">
    <property type="nucleotide sequence ID" value="NZ_LT900338.1"/>
</dbReference>
<dbReference type="SMR" id="Q5FRT1"/>
<dbReference type="STRING" id="290633.GOX1148"/>
<dbReference type="KEGG" id="gox:GOX1148"/>
<dbReference type="eggNOG" id="COG1057">
    <property type="taxonomic scope" value="Bacteria"/>
</dbReference>
<dbReference type="HOGENOM" id="CLU_069765_2_0_5"/>
<dbReference type="UniPathway" id="UPA00253">
    <property type="reaction ID" value="UER00332"/>
</dbReference>
<dbReference type="Proteomes" id="UP000006375">
    <property type="component" value="Chromosome"/>
</dbReference>
<dbReference type="GO" id="GO:0005524">
    <property type="term" value="F:ATP binding"/>
    <property type="evidence" value="ECO:0007669"/>
    <property type="project" value="UniProtKB-KW"/>
</dbReference>
<dbReference type="GO" id="GO:0004515">
    <property type="term" value="F:nicotinate-nucleotide adenylyltransferase activity"/>
    <property type="evidence" value="ECO:0007669"/>
    <property type="project" value="UniProtKB-UniRule"/>
</dbReference>
<dbReference type="GO" id="GO:0009435">
    <property type="term" value="P:NAD biosynthetic process"/>
    <property type="evidence" value="ECO:0007669"/>
    <property type="project" value="UniProtKB-UniRule"/>
</dbReference>
<dbReference type="CDD" id="cd02165">
    <property type="entry name" value="NMNAT"/>
    <property type="match status" value="1"/>
</dbReference>
<dbReference type="Gene3D" id="3.40.50.620">
    <property type="entry name" value="HUPs"/>
    <property type="match status" value="1"/>
</dbReference>
<dbReference type="HAMAP" id="MF_00244">
    <property type="entry name" value="NaMN_adenylyltr"/>
    <property type="match status" value="1"/>
</dbReference>
<dbReference type="InterPro" id="IPR004821">
    <property type="entry name" value="Cyt_trans-like"/>
</dbReference>
<dbReference type="InterPro" id="IPR005248">
    <property type="entry name" value="NadD/NMNAT"/>
</dbReference>
<dbReference type="InterPro" id="IPR014729">
    <property type="entry name" value="Rossmann-like_a/b/a_fold"/>
</dbReference>
<dbReference type="NCBIfam" id="TIGR00482">
    <property type="entry name" value="nicotinate (nicotinamide) nucleotide adenylyltransferase"/>
    <property type="match status" value="1"/>
</dbReference>
<dbReference type="NCBIfam" id="NF000843">
    <property type="entry name" value="PRK00071.2-2"/>
    <property type="match status" value="1"/>
</dbReference>
<dbReference type="PANTHER" id="PTHR39321">
    <property type="entry name" value="NICOTINATE-NUCLEOTIDE ADENYLYLTRANSFERASE-RELATED"/>
    <property type="match status" value="1"/>
</dbReference>
<dbReference type="PANTHER" id="PTHR39321:SF3">
    <property type="entry name" value="PHOSPHOPANTETHEINE ADENYLYLTRANSFERASE"/>
    <property type="match status" value="1"/>
</dbReference>
<dbReference type="Pfam" id="PF01467">
    <property type="entry name" value="CTP_transf_like"/>
    <property type="match status" value="1"/>
</dbReference>
<dbReference type="SUPFAM" id="SSF52374">
    <property type="entry name" value="Nucleotidylyl transferase"/>
    <property type="match status" value="1"/>
</dbReference>
<accession>Q5FRT1</accession>